<sequence>MEAPYSMTAHYDEFQEVKYESRCGTGGARGTSLPPGFPRSSGRSASGARSGLPRWNRREVCLLSGLVFAAGLCAILAAMLALKYLGPGAAGTGGACPEGCPERKAFARAARFLSANLDASIDPCQDFYSFACGGWLRRHAIPDDKLTYGTIAAIGEQNEERLRRLLARPTGGPGGAAQRKVRAFFRSCLDMREIERLGPRPMLEVIEDCGGWDLGGAADRPGAARWDLNRLLYKAQGVYSAAALFSLTVSLDDRNSSRYVIRIDQDGLTLPERTLYLAQDEGSEKVLAAYKVFMERLLRLLGADAVEQKAQEILQLEQRLANISVSEYDDLRRDVSSVYNKVTLGQLQKITPHLQWKWLLDQIFQEDFSEEEEVVLLATDYMQQVSQLIRSTPRRILHNYLVWRVVVVLSEHLSPPFREALHELAKEMEGNDKPQELARVCLGQANRHFGMALGALFVHEHFSAASKAKVQQLVEDIKYILGQRLEELDWMDAQTKAAARAKLQYMMVMVGYPDFLLKPEAVDKEYEFEVHEKTYLKNILNSIRFSIQLSVKKIRQEVDKSTWLLPPQALNAYYLPNKNQMVFPAGILQPTLYDPDFPQSLNYGGIGTIIGHELTHGYDDWGGQYDRSGNLLHWWTEASYSRFLHKAECIVRLYDNFTVYNQRVNGKHTLGENIADMGGLKLAYYAYQKWVREHGPEHPLHRLKYTHNQLFFIAFAQNWCIKRRSQSIYLQVLTDKHAPEHYRVLGSVSQFEEFGRAFHCPKDSPMNPVHKCSVW</sequence>
<proteinExistence type="evidence at transcript level"/>
<evidence type="ECO:0000250" key="1"/>
<evidence type="ECO:0000255" key="2"/>
<evidence type="ECO:0000255" key="3">
    <source>
        <dbReference type="PROSITE-ProRule" id="PRU01233"/>
    </source>
</evidence>
<evidence type="ECO:0000255" key="4">
    <source>
        <dbReference type="PROSITE-ProRule" id="PRU10095"/>
    </source>
</evidence>
<evidence type="ECO:0000256" key="5">
    <source>
        <dbReference type="SAM" id="MobiDB-lite"/>
    </source>
</evidence>
<evidence type="ECO:0000305" key="6"/>
<name>ECEL1_RAT</name>
<gene>
    <name type="primary">Ecel1</name>
    <name type="synonym">Dine</name>
    <name type="synonym">Xce</name>
</gene>
<accession>Q9JHL3</accession>
<accession>Q9Z192</accession>
<feature type="chain" id="PRO_0000078226" description="Endothelin-converting enzyme-like 1">
    <location>
        <begin position="1"/>
        <end position="775"/>
    </location>
</feature>
<feature type="topological domain" description="Cytoplasmic" evidence="2">
    <location>
        <begin position="1"/>
        <end position="61"/>
    </location>
</feature>
<feature type="transmembrane region" description="Helical; Signal-anchor for type II membrane protein" evidence="2">
    <location>
        <begin position="62"/>
        <end position="82"/>
    </location>
</feature>
<feature type="topological domain" description="Lumenal" evidence="2">
    <location>
        <begin position="83"/>
        <end position="775"/>
    </location>
</feature>
<feature type="domain" description="Peptidase M13" evidence="3">
    <location>
        <begin position="99"/>
        <end position="775"/>
    </location>
</feature>
<feature type="region of interest" description="Disordered" evidence="5">
    <location>
        <begin position="23"/>
        <end position="51"/>
    </location>
</feature>
<feature type="compositionally biased region" description="Low complexity" evidence="5">
    <location>
        <begin position="32"/>
        <end position="51"/>
    </location>
</feature>
<feature type="active site" evidence="3 4">
    <location>
        <position position="613"/>
    </location>
</feature>
<feature type="active site" description="Proton donor" evidence="3">
    <location>
        <position position="676"/>
    </location>
</feature>
<feature type="binding site" evidence="3 4">
    <location>
        <position position="612"/>
    </location>
    <ligand>
        <name>Zn(2+)</name>
        <dbReference type="ChEBI" id="CHEBI:29105"/>
        <note>catalytic</note>
    </ligand>
</feature>
<feature type="binding site" evidence="3 4">
    <location>
        <position position="616"/>
    </location>
    <ligand>
        <name>Zn(2+)</name>
        <dbReference type="ChEBI" id="CHEBI:29105"/>
        <note>catalytic</note>
    </ligand>
</feature>
<feature type="binding site" evidence="3">
    <location>
        <position position="672"/>
    </location>
    <ligand>
        <name>Zn(2+)</name>
        <dbReference type="ChEBI" id="CHEBI:29105"/>
        <note>catalytic</note>
    </ligand>
</feature>
<feature type="glycosylation site" description="N-linked (GlcNAc...) asparagine" evidence="2">
    <location>
        <position position="255"/>
    </location>
</feature>
<feature type="glycosylation site" description="N-linked (GlcNAc...) asparagine" evidence="2">
    <location>
        <position position="322"/>
    </location>
</feature>
<feature type="glycosylation site" description="N-linked (GlcNAc...) asparagine" evidence="2">
    <location>
        <position position="656"/>
    </location>
</feature>
<feature type="disulfide bond" evidence="3">
    <location>
        <begin position="124"/>
        <end position="760"/>
    </location>
</feature>
<feature type="disulfide bond" evidence="3">
    <location>
        <begin position="132"/>
        <end position="720"/>
    </location>
</feature>
<feature type="disulfide bond" evidence="3">
    <location>
        <begin position="188"/>
        <end position="441"/>
    </location>
</feature>
<feature type="disulfide bond" evidence="3">
    <location>
        <begin position="649"/>
        <end position="772"/>
    </location>
</feature>
<feature type="sequence conflict" description="In Ref. 2; CAA76114." evidence="6" ref="2">
    <original>L</original>
    <variation>F</variation>
    <location>
        <position position="536"/>
    </location>
</feature>
<comment type="function">
    <text>May contribute to the degradation of peptide hormones and be involved in the inactivation of neuronal peptides. Cleaves the synthetic substrate Z-Gly-Gly-Leu-pNA and releases pNA. May protect against C2-ceramide-induced apoptosis.</text>
</comment>
<comment type="cofactor">
    <cofactor evidence="1">
        <name>Zn(2+)</name>
        <dbReference type="ChEBI" id="CHEBI:29105"/>
    </cofactor>
    <text evidence="1">Binds 1 zinc ion.</text>
</comment>
<comment type="subcellular location">
    <subcellularLocation>
        <location>Membrane</location>
        <topology>Single-pass type II membrane protein</topology>
    </subcellularLocation>
</comment>
<comment type="tissue specificity">
    <text>Highly expressed in the CNS, in particular in neurons of the caudate putamen, diagonal band, the paraventricular nucleus of the thalamus, part of the hypothalamus, in cranial motor nuclei, inferior olive, and substantia gelatinosa of the spinal tract trigeminal nucleus. Not detected in cerebral cortex, hippocampus and cerebellum.</text>
</comment>
<comment type="induction">
    <text>By mechanical damage to nerve cells.</text>
</comment>
<comment type="similarity">
    <text evidence="3 6">Belongs to the peptidase M13 family.</text>
</comment>
<dbReference type="EC" id="3.4.24.-"/>
<dbReference type="EMBL" id="AB026293">
    <property type="protein sequence ID" value="BAA95004.1"/>
    <property type="molecule type" value="mRNA"/>
</dbReference>
<dbReference type="EMBL" id="AB023896">
    <property type="protein sequence ID" value="BAA95006.1"/>
    <property type="molecule type" value="mRNA"/>
</dbReference>
<dbReference type="EMBL" id="Y16188">
    <property type="protein sequence ID" value="CAA76114.1"/>
    <property type="molecule type" value="mRNA"/>
</dbReference>
<dbReference type="RefSeq" id="NP_068544.1">
    <property type="nucleotide sequence ID" value="NM_021776.1"/>
</dbReference>
<dbReference type="SMR" id="Q9JHL3"/>
<dbReference type="FunCoup" id="Q9JHL3">
    <property type="interactions" value="64"/>
</dbReference>
<dbReference type="STRING" id="10116.ENSRNOP00000026388"/>
<dbReference type="MEROPS" id="M13.007"/>
<dbReference type="GlyCosmos" id="Q9JHL3">
    <property type="glycosylation" value="3 sites, No reported glycans"/>
</dbReference>
<dbReference type="GlyGen" id="Q9JHL3">
    <property type="glycosylation" value="3 sites"/>
</dbReference>
<dbReference type="PhosphoSitePlus" id="Q9JHL3"/>
<dbReference type="PaxDb" id="10116-ENSRNOP00000026388"/>
<dbReference type="GeneID" id="60417"/>
<dbReference type="KEGG" id="rno:60417"/>
<dbReference type="UCSC" id="RGD:61806">
    <property type="organism name" value="rat"/>
</dbReference>
<dbReference type="AGR" id="RGD:61806"/>
<dbReference type="CTD" id="9427"/>
<dbReference type="RGD" id="61806">
    <property type="gene designation" value="Ecel1"/>
</dbReference>
<dbReference type="eggNOG" id="KOG3624">
    <property type="taxonomic scope" value="Eukaryota"/>
</dbReference>
<dbReference type="InParanoid" id="Q9JHL3"/>
<dbReference type="PhylomeDB" id="Q9JHL3"/>
<dbReference type="PRO" id="PR:Q9JHL3"/>
<dbReference type="Proteomes" id="UP000002494">
    <property type="component" value="Unplaced"/>
</dbReference>
<dbReference type="GO" id="GO:0005886">
    <property type="term" value="C:plasma membrane"/>
    <property type="evidence" value="ECO:0000318"/>
    <property type="project" value="GO_Central"/>
</dbReference>
<dbReference type="GO" id="GO:0046872">
    <property type="term" value="F:metal ion binding"/>
    <property type="evidence" value="ECO:0007669"/>
    <property type="project" value="UniProtKB-KW"/>
</dbReference>
<dbReference type="GO" id="GO:0004222">
    <property type="term" value="F:metalloendopeptidase activity"/>
    <property type="evidence" value="ECO:0000266"/>
    <property type="project" value="RGD"/>
</dbReference>
<dbReference type="GO" id="GO:0035556">
    <property type="term" value="P:intracellular signal transduction"/>
    <property type="evidence" value="ECO:0000314"/>
    <property type="project" value="RGD"/>
</dbReference>
<dbReference type="GO" id="GO:0007218">
    <property type="term" value="P:neuropeptide signaling pathway"/>
    <property type="evidence" value="ECO:0000314"/>
    <property type="project" value="RGD"/>
</dbReference>
<dbReference type="GO" id="GO:0016485">
    <property type="term" value="P:protein processing"/>
    <property type="evidence" value="ECO:0000318"/>
    <property type="project" value="GO_Central"/>
</dbReference>
<dbReference type="GO" id="GO:0003016">
    <property type="term" value="P:respiratory system process"/>
    <property type="evidence" value="ECO:0000250"/>
    <property type="project" value="UniProtKB"/>
</dbReference>
<dbReference type="CDD" id="cd08662">
    <property type="entry name" value="M13"/>
    <property type="match status" value="1"/>
</dbReference>
<dbReference type="Gene3D" id="3.40.390.10">
    <property type="entry name" value="Collagenase (Catalytic Domain)"/>
    <property type="match status" value="1"/>
</dbReference>
<dbReference type="Gene3D" id="1.10.1380.10">
    <property type="entry name" value="Neutral endopeptidase , domain2"/>
    <property type="match status" value="1"/>
</dbReference>
<dbReference type="InterPro" id="IPR024079">
    <property type="entry name" value="MetalloPept_cat_dom_sf"/>
</dbReference>
<dbReference type="InterPro" id="IPR000718">
    <property type="entry name" value="Peptidase_M13"/>
</dbReference>
<dbReference type="InterPro" id="IPR018497">
    <property type="entry name" value="Peptidase_M13_C"/>
</dbReference>
<dbReference type="InterPro" id="IPR042089">
    <property type="entry name" value="Peptidase_M13_dom_2"/>
</dbReference>
<dbReference type="InterPro" id="IPR008753">
    <property type="entry name" value="Peptidase_M13_N"/>
</dbReference>
<dbReference type="PANTHER" id="PTHR11733:SF195">
    <property type="entry name" value="ENDOTHELIN-CONVERTING ENZYME-LIKE 1"/>
    <property type="match status" value="1"/>
</dbReference>
<dbReference type="PANTHER" id="PTHR11733">
    <property type="entry name" value="ZINC METALLOPROTEASE FAMILY M13 NEPRILYSIN-RELATED"/>
    <property type="match status" value="1"/>
</dbReference>
<dbReference type="Pfam" id="PF01431">
    <property type="entry name" value="Peptidase_M13"/>
    <property type="match status" value="1"/>
</dbReference>
<dbReference type="Pfam" id="PF05649">
    <property type="entry name" value="Peptidase_M13_N"/>
    <property type="match status" value="1"/>
</dbReference>
<dbReference type="PRINTS" id="PR00786">
    <property type="entry name" value="NEPRILYSIN"/>
</dbReference>
<dbReference type="SUPFAM" id="SSF55486">
    <property type="entry name" value="Metalloproteases ('zincins'), catalytic domain"/>
    <property type="match status" value="1"/>
</dbReference>
<dbReference type="PROSITE" id="PS51885">
    <property type="entry name" value="NEPRILYSIN"/>
    <property type="match status" value="1"/>
</dbReference>
<dbReference type="PROSITE" id="PS00142">
    <property type="entry name" value="ZINC_PROTEASE"/>
    <property type="match status" value="1"/>
</dbReference>
<reference key="1">
    <citation type="journal article" date="2000" name="Proc. Natl. Acad. Sci. U.S.A.">
        <title>Damage-induced neuronal endopeptidase (DINE) is a unique metallopeptidase expressed in response to neuronal damage and activates superoxide scavengers.</title>
        <authorList>
            <person name="Kiryu-Seo S."/>
            <person name="Sasaki M."/>
            <person name="Yokohama H."/>
            <person name="Nakagomi S."/>
            <person name="Hirayama T."/>
            <person name="Aoki S."/>
            <person name="Wada K."/>
            <person name="Kiyama H."/>
        </authorList>
    </citation>
    <scope>NUCLEOTIDE SEQUENCE [MRNA]</scope>
    <source>
        <strain>Wistar</strain>
        <tissue>Brain</tissue>
    </source>
</reference>
<reference key="2">
    <citation type="journal article" date="1999" name="Brain Res. Mol. Brain Res.">
        <title>XCE, a new member of the endothelin-converting enzyme and neutral endopeptidase family, is preferentially expressed in the CNS.</title>
        <authorList>
            <person name="Valdenaire O."/>
            <person name="Richards J.G."/>
            <person name="Faull R.L.M."/>
            <person name="Schweizer A."/>
        </authorList>
    </citation>
    <scope>NUCLEOTIDE SEQUENCE [MRNA] OF 431-632</scope>
</reference>
<keyword id="KW-1015">Disulfide bond</keyword>
<keyword id="KW-0325">Glycoprotein</keyword>
<keyword id="KW-0378">Hydrolase</keyword>
<keyword id="KW-0472">Membrane</keyword>
<keyword id="KW-0479">Metal-binding</keyword>
<keyword id="KW-0482">Metalloprotease</keyword>
<keyword id="KW-0645">Protease</keyword>
<keyword id="KW-1185">Reference proteome</keyword>
<keyword id="KW-0735">Signal-anchor</keyword>
<keyword id="KW-0812">Transmembrane</keyword>
<keyword id="KW-1133">Transmembrane helix</keyword>
<keyword id="KW-0862">Zinc</keyword>
<protein>
    <recommendedName>
        <fullName>Endothelin-converting enzyme-like 1</fullName>
        <ecNumber>3.4.24.-</ecNumber>
    </recommendedName>
    <alternativeName>
        <fullName>Damage-induced neuronal endopeptidase</fullName>
    </alternativeName>
    <alternativeName>
        <fullName>Xce protein</fullName>
    </alternativeName>
</protein>
<organism>
    <name type="scientific">Rattus norvegicus</name>
    <name type="common">Rat</name>
    <dbReference type="NCBI Taxonomy" id="10116"/>
    <lineage>
        <taxon>Eukaryota</taxon>
        <taxon>Metazoa</taxon>
        <taxon>Chordata</taxon>
        <taxon>Craniata</taxon>
        <taxon>Vertebrata</taxon>
        <taxon>Euteleostomi</taxon>
        <taxon>Mammalia</taxon>
        <taxon>Eutheria</taxon>
        <taxon>Euarchontoglires</taxon>
        <taxon>Glires</taxon>
        <taxon>Rodentia</taxon>
        <taxon>Myomorpha</taxon>
        <taxon>Muroidea</taxon>
        <taxon>Muridae</taxon>
        <taxon>Murinae</taxon>
        <taxon>Rattus</taxon>
    </lineage>
</organism>